<evidence type="ECO:0000255" key="1">
    <source>
        <dbReference type="HAMAP-Rule" id="MF_01363"/>
    </source>
</evidence>
<evidence type="ECO:0000305" key="2"/>
<proteinExistence type="inferred from homology"/>
<sequence length="103" mass="11461">MYAVLTTGGKQYRVQEGDVLFVEKLNAEVDSTVELTEVLAVAKDGEIKVGAPVVEGAKVVAKVLAQGKAKKVVVFKYKRKKDYRRKNGHRQPYTKIVIEKIEA</sequence>
<dbReference type="EMBL" id="BA000016">
    <property type="protein sequence ID" value="BAB81836.1"/>
    <property type="molecule type" value="Genomic_DNA"/>
</dbReference>
<dbReference type="RefSeq" id="WP_003452389.1">
    <property type="nucleotide sequence ID" value="NC_003366.1"/>
</dbReference>
<dbReference type="SMR" id="Q8XII9"/>
<dbReference type="STRING" id="195102.gene:10491400"/>
<dbReference type="GeneID" id="93001336"/>
<dbReference type="KEGG" id="cpe:CPE2130"/>
<dbReference type="HOGENOM" id="CLU_061463_3_2_9"/>
<dbReference type="Proteomes" id="UP000000818">
    <property type="component" value="Chromosome"/>
</dbReference>
<dbReference type="GO" id="GO:0005737">
    <property type="term" value="C:cytoplasm"/>
    <property type="evidence" value="ECO:0007669"/>
    <property type="project" value="UniProtKB-ARBA"/>
</dbReference>
<dbReference type="GO" id="GO:1990904">
    <property type="term" value="C:ribonucleoprotein complex"/>
    <property type="evidence" value="ECO:0007669"/>
    <property type="project" value="UniProtKB-KW"/>
</dbReference>
<dbReference type="GO" id="GO:0005840">
    <property type="term" value="C:ribosome"/>
    <property type="evidence" value="ECO:0007669"/>
    <property type="project" value="UniProtKB-KW"/>
</dbReference>
<dbReference type="GO" id="GO:0019843">
    <property type="term" value="F:rRNA binding"/>
    <property type="evidence" value="ECO:0007669"/>
    <property type="project" value="UniProtKB-UniRule"/>
</dbReference>
<dbReference type="GO" id="GO:0003735">
    <property type="term" value="F:structural constituent of ribosome"/>
    <property type="evidence" value="ECO:0007669"/>
    <property type="project" value="InterPro"/>
</dbReference>
<dbReference type="GO" id="GO:0006412">
    <property type="term" value="P:translation"/>
    <property type="evidence" value="ECO:0007669"/>
    <property type="project" value="UniProtKB-UniRule"/>
</dbReference>
<dbReference type="HAMAP" id="MF_01363">
    <property type="entry name" value="Ribosomal_bL21"/>
    <property type="match status" value="1"/>
</dbReference>
<dbReference type="InterPro" id="IPR028909">
    <property type="entry name" value="bL21-like"/>
</dbReference>
<dbReference type="InterPro" id="IPR036164">
    <property type="entry name" value="bL21-like_sf"/>
</dbReference>
<dbReference type="InterPro" id="IPR001787">
    <property type="entry name" value="Ribosomal_bL21"/>
</dbReference>
<dbReference type="InterPro" id="IPR018258">
    <property type="entry name" value="Ribosomal_bL21_CS"/>
</dbReference>
<dbReference type="NCBIfam" id="TIGR00061">
    <property type="entry name" value="L21"/>
    <property type="match status" value="1"/>
</dbReference>
<dbReference type="PANTHER" id="PTHR21349">
    <property type="entry name" value="50S RIBOSOMAL PROTEIN L21"/>
    <property type="match status" value="1"/>
</dbReference>
<dbReference type="PANTHER" id="PTHR21349:SF0">
    <property type="entry name" value="LARGE RIBOSOMAL SUBUNIT PROTEIN BL21M"/>
    <property type="match status" value="1"/>
</dbReference>
<dbReference type="Pfam" id="PF00829">
    <property type="entry name" value="Ribosomal_L21p"/>
    <property type="match status" value="1"/>
</dbReference>
<dbReference type="SUPFAM" id="SSF141091">
    <property type="entry name" value="L21p-like"/>
    <property type="match status" value="1"/>
</dbReference>
<dbReference type="PROSITE" id="PS01169">
    <property type="entry name" value="RIBOSOMAL_L21"/>
    <property type="match status" value="1"/>
</dbReference>
<accession>Q8XII9</accession>
<protein>
    <recommendedName>
        <fullName evidence="1">Large ribosomal subunit protein bL21</fullName>
    </recommendedName>
    <alternativeName>
        <fullName evidence="2">50S ribosomal protein L21</fullName>
    </alternativeName>
</protein>
<keyword id="KW-1185">Reference proteome</keyword>
<keyword id="KW-0687">Ribonucleoprotein</keyword>
<keyword id="KW-0689">Ribosomal protein</keyword>
<keyword id="KW-0694">RNA-binding</keyword>
<keyword id="KW-0699">rRNA-binding</keyword>
<name>RL21_CLOPE</name>
<comment type="function">
    <text evidence="1">This protein binds to 23S rRNA in the presence of protein L20.</text>
</comment>
<comment type="subunit">
    <text evidence="1">Part of the 50S ribosomal subunit. Contacts protein L20.</text>
</comment>
<comment type="similarity">
    <text evidence="1">Belongs to the bacterial ribosomal protein bL21 family.</text>
</comment>
<organism>
    <name type="scientific">Clostridium perfringens (strain 13 / Type A)</name>
    <dbReference type="NCBI Taxonomy" id="195102"/>
    <lineage>
        <taxon>Bacteria</taxon>
        <taxon>Bacillati</taxon>
        <taxon>Bacillota</taxon>
        <taxon>Clostridia</taxon>
        <taxon>Eubacteriales</taxon>
        <taxon>Clostridiaceae</taxon>
        <taxon>Clostridium</taxon>
    </lineage>
</organism>
<reference key="1">
    <citation type="journal article" date="2002" name="Proc. Natl. Acad. Sci. U.S.A.">
        <title>Complete genome sequence of Clostridium perfringens, an anaerobic flesh-eater.</title>
        <authorList>
            <person name="Shimizu T."/>
            <person name="Ohtani K."/>
            <person name="Hirakawa H."/>
            <person name="Ohshima K."/>
            <person name="Yamashita A."/>
            <person name="Shiba T."/>
            <person name="Ogasawara N."/>
            <person name="Hattori M."/>
            <person name="Kuhara S."/>
            <person name="Hayashi H."/>
        </authorList>
    </citation>
    <scope>NUCLEOTIDE SEQUENCE [LARGE SCALE GENOMIC DNA]</scope>
    <source>
        <strain>13 / Type A</strain>
    </source>
</reference>
<gene>
    <name evidence="1" type="primary">rplU</name>
    <name type="ordered locus">CPE2130</name>
</gene>
<feature type="chain" id="PRO_0000269304" description="Large ribosomal subunit protein bL21">
    <location>
        <begin position="1"/>
        <end position="103"/>
    </location>
</feature>